<comment type="catalytic activity">
    <reaction evidence="1">
        <text>D-erythro-1-(imidazol-4-yl)glycerol 3-phosphate = 3-(imidazol-4-yl)-2-oxopropyl phosphate + H2O</text>
        <dbReference type="Rhea" id="RHEA:11040"/>
        <dbReference type="ChEBI" id="CHEBI:15377"/>
        <dbReference type="ChEBI" id="CHEBI:57766"/>
        <dbReference type="ChEBI" id="CHEBI:58278"/>
        <dbReference type="EC" id="4.2.1.19"/>
    </reaction>
</comment>
<comment type="pathway">
    <text evidence="1">Amino-acid biosynthesis; L-histidine biosynthesis; L-histidine from 5-phospho-alpha-D-ribose 1-diphosphate: step 6/9.</text>
</comment>
<comment type="subcellular location">
    <subcellularLocation>
        <location evidence="1">Cytoplasm</location>
    </subcellularLocation>
</comment>
<comment type="similarity">
    <text evidence="1">Belongs to the imidazoleglycerol-phosphate dehydratase family.</text>
</comment>
<reference key="1">
    <citation type="journal article" date="2000" name="Proc. Natl. Acad. Sci. U.S.A.">
        <title>Genome sequence of Halobacterium species NRC-1.</title>
        <authorList>
            <person name="Ng W.V."/>
            <person name="Kennedy S.P."/>
            <person name="Mahairas G.G."/>
            <person name="Berquist B."/>
            <person name="Pan M."/>
            <person name="Shukla H.D."/>
            <person name="Lasky S.R."/>
            <person name="Baliga N.S."/>
            <person name="Thorsson V."/>
            <person name="Sbrogna J."/>
            <person name="Swartzell S."/>
            <person name="Weir D."/>
            <person name="Hall J."/>
            <person name="Dahl T.A."/>
            <person name="Welti R."/>
            <person name="Goo Y.A."/>
            <person name="Leithauser B."/>
            <person name="Keller K."/>
            <person name="Cruz R."/>
            <person name="Danson M.J."/>
            <person name="Hough D.W."/>
            <person name="Maddocks D.G."/>
            <person name="Jablonski P.E."/>
            <person name="Krebs M.P."/>
            <person name="Angevine C.M."/>
            <person name="Dale H."/>
            <person name="Isenbarger T.A."/>
            <person name="Peck R.F."/>
            <person name="Pohlschroder M."/>
            <person name="Spudich J.L."/>
            <person name="Jung K.-H."/>
            <person name="Alam M."/>
            <person name="Freitas T."/>
            <person name="Hou S."/>
            <person name="Daniels C.J."/>
            <person name="Dennis P.P."/>
            <person name="Omer A.D."/>
            <person name="Ebhardt H."/>
            <person name="Lowe T.M."/>
            <person name="Liang P."/>
            <person name="Riley M."/>
            <person name="Hood L."/>
            <person name="DasSarma S."/>
        </authorList>
    </citation>
    <scope>NUCLEOTIDE SEQUENCE [LARGE SCALE GENOMIC DNA]</scope>
    <source>
        <strain>ATCC 700922 / JCM 11081 / NRC-1</strain>
    </source>
</reference>
<name>HIS7_HALSA</name>
<keyword id="KW-0028">Amino-acid biosynthesis</keyword>
<keyword id="KW-0963">Cytoplasm</keyword>
<keyword id="KW-0368">Histidine biosynthesis</keyword>
<keyword id="KW-0456">Lyase</keyword>
<keyword id="KW-1185">Reference proteome</keyword>
<accession>Q9HN13</accession>
<protein>
    <recommendedName>
        <fullName evidence="1">Imidazoleglycerol-phosphate dehydratase</fullName>
        <shortName evidence="1">IGPD</shortName>
        <ecNumber evidence="1">4.2.1.19</ecNumber>
    </recommendedName>
</protein>
<dbReference type="EC" id="4.2.1.19" evidence="1"/>
<dbReference type="EMBL" id="AE004437">
    <property type="protein sequence ID" value="AAG20408.1"/>
    <property type="molecule type" value="Genomic_DNA"/>
</dbReference>
<dbReference type="PIR" id="D84380">
    <property type="entry name" value="D84380"/>
</dbReference>
<dbReference type="RefSeq" id="WP_010903709.1">
    <property type="nucleotide sequence ID" value="NC_002607.1"/>
</dbReference>
<dbReference type="SMR" id="Q9HN13"/>
<dbReference type="FunCoup" id="Q9HN13">
    <property type="interactions" value="73"/>
</dbReference>
<dbReference type="STRING" id="64091.VNG_2295G"/>
<dbReference type="PaxDb" id="64091-VNG_2295G"/>
<dbReference type="GeneID" id="89348328"/>
<dbReference type="KEGG" id="hal:VNG_2295G"/>
<dbReference type="PATRIC" id="fig|64091.14.peg.1771"/>
<dbReference type="HOGENOM" id="CLU_044308_3_0_2"/>
<dbReference type="InParanoid" id="Q9HN13"/>
<dbReference type="OrthoDB" id="103579at2157"/>
<dbReference type="PhylomeDB" id="Q9HN13"/>
<dbReference type="UniPathway" id="UPA00031">
    <property type="reaction ID" value="UER00011"/>
</dbReference>
<dbReference type="Proteomes" id="UP000000554">
    <property type="component" value="Chromosome"/>
</dbReference>
<dbReference type="GO" id="GO:0005737">
    <property type="term" value="C:cytoplasm"/>
    <property type="evidence" value="ECO:0007669"/>
    <property type="project" value="UniProtKB-SubCell"/>
</dbReference>
<dbReference type="GO" id="GO:0004424">
    <property type="term" value="F:imidazoleglycerol-phosphate dehydratase activity"/>
    <property type="evidence" value="ECO:0000318"/>
    <property type="project" value="GO_Central"/>
</dbReference>
<dbReference type="GO" id="GO:0000105">
    <property type="term" value="P:L-histidine biosynthetic process"/>
    <property type="evidence" value="ECO:0000318"/>
    <property type="project" value="GO_Central"/>
</dbReference>
<dbReference type="CDD" id="cd07914">
    <property type="entry name" value="IGPD"/>
    <property type="match status" value="1"/>
</dbReference>
<dbReference type="FunFam" id="3.30.230.40:FF:000001">
    <property type="entry name" value="Imidazoleglycerol-phosphate dehydratase HisB"/>
    <property type="match status" value="1"/>
</dbReference>
<dbReference type="FunFam" id="3.30.230.40:FF:000003">
    <property type="entry name" value="Imidazoleglycerol-phosphate dehydratase HisB"/>
    <property type="match status" value="1"/>
</dbReference>
<dbReference type="Gene3D" id="3.30.230.40">
    <property type="entry name" value="Imidazole glycerol phosphate dehydratase, domain 1"/>
    <property type="match status" value="2"/>
</dbReference>
<dbReference type="HAMAP" id="MF_00076">
    <property type="entry name" value="HisB"/>
    <property type="match status" value="1"/>
</dbReference>
<dbReference type="InterPro" id="IPR038494">
    <property type="entry name" value="IGPD_sf"/>
</dbReference>
<dbReference type="InterPro" id="IPR000807">
    <property type="entry name" value="ImidazoleglycerolP_deHydtase"/>
</dbReference>
<dbReference type="InterPro" id="IPR020565">
    <property type="entry name" value="ImidazoleglycerP_deHydtase_CS"/>
</dbReference>
<dbReference type="InterPro" id="IPR020568">
    <property type="entry name" value="Ribosomal_Su5_D2-typ_SF"/>
</dbReference>
<dbReference type="NCBIfam" id="NF002111">
    <property type="entry name" value="PRK00951.2-1"/>
    <property type="match status" value="1"/>
</dbReference>
<dbReference type="NCBIfam" id="NF002114">
    <property type="entry name" value="PRK00951.2-4"/>
    <property type="match status" value="1"/>
</dbReference>
<dbReference type="NCBIfam" id="NF002116">
    <property type="entry name" value="PRK00951.2-6"/>
    <property type="match status" value="1"/>
</dbReference>
<dbReference type="PANTHER" id="PTHR23133:SF2">
    <property type="entry name" value="IMIDAZOLEGLYCEROL-PHOSPHATE DEHYDRATASE"/>
    <property type="match status" value="1"/>
</dbReference>
<dbReference type="PANTHER" id="PTHR23133">
    <property type="entry name" value="IMIDAZOLEGLYCEROL-PHOSPHATE DEHYDRATASE HIS7"/>
    <property type="match status" value="1"/>
</dbReference>
<dbReference type="Pfam" id="PF00475">
    <property type="entry name" value="IGPD"/>
    <property type="match status" value="1"/>
</dbReference>
<dbReference type="SUPFAM" id="SSF54211">
    <property type="entry name" value="Ribosomal protein S5 domain 2-like"/>
    <property type="match status" value="2"/>
</dbReference>
<dbReference type="PROSITE" id="PS00954">
    <property type="entry name" value="IGP_DEHYDRATASE_1"/>
    <property type="match status" value="1"/>
</dbReference>
<dbReference type="PROSITE" id="PS00955">
    <property type="entry name" value="IGP_DEHYDRATASE_2"/>
    <property type="match status" value="1"/>
</dbReference>
<proteinExistence type="inferred from homology"/>
<evidence type="ECO:0000255" key="1">
    <source>
        <dbReference type="HAMAP-Rule" id="MF_00076"/>
    </source>
</evidence>
<gene>
    <name evidence="1" type="primary">hisB</name>
    <name type="ordered locus">VNG_2295G</name>
</gene>
<organism>
    <name type="scientific">Halobacterium salinarum (strain ATCC 700922 / JCM 11081 / NRC-1)</name>
    <name type="common">Halobacterium halobium</name>
    <dbReference type="NCBI Taxonomy" id="64091"/>
    <lineage>
        <taxon>Archaea</taxon>
        <taxon>Methanobacteriati</taxon>
        <taxon>Methanobacteriota</taxon>
        <taxon>Stenosarchaea group</taxon>
        <taxon>Halobacteria</taxon>
        <taxon>Halobacteriales</taxon>
        <taxon>Halobacteriaceae</taxon>
        <taxon>Halobacterium</taxon>
        <taxon>Halobacterium salinarum NRC-34001</taxon>
    </lineage>
</organism>
<sequence length="196" mass="20952">MTDRTAAVTRETAETDVAVTLDLDGDGEHTVDTGIGFFDHMLAAFAKHGLFDVTVRCDGDLDVDDHHTVEDVGIALGAAFSEAVGEKRGIQRFADRRVPLDEAVASVVVDVSGRAVYEFDGGFSQPTVGGLTSRMAAHFWRTFATHAAVTLHCGVDGENAHHEIEALFKGVGRAVDDATRIDQRRAGETPSTKGDL</sequence>
<feature type="chain" id="PRO_0000158187" description="Imidazoleglycerol-phosphate dehydratase">
    <location>
        <begin position="1"/>
        <end position="196"/>
    </location>
</feature>